<keyword id="KW-0012">Acyltransferase</keyword>
<keyword id="KW-0963">Cytoplasm</keyword>
<keyword id="KW-0808">Transferase</keyword>
<gene>
    <name evidence="1" type="primary">lipB</name>
    <name type="ordered locus">RL2555</name>
</gene>
<proteinExistence type="inferred from homology"/>
<dbReference type="EC" id="2.3.1.181" evidence="1"/>
<dbReference type="EMBL" id="AM236080">
    <property type="protein sequence ID" value="CAK08043.1"/>
    <property type="status" value="ALT_INIT"/>
    <property type="molecule type" value="Genomic_DNA"/>
</dbReference>
<dbReference type="RefSeq" id="WP_028741290.1">
    <property type="nucleotide sequence ID" value="NC_008380.1"/>
</dbReference>
<dbReference type="SMR" id="Q1MG80"/>
<dbReference type="EnsemblBacteria" id="CAK08043">
    <property type="protein sequence ID" value="CAK08043"/>
    <property type="gene ID" value="RL2555"/>
</dbReference>
<dbReference type="KEGG" id="rle:RL2555"/>
<dbReference type="eggNOG" id="COG0321">
    <property type="taxonomic scope" value="Bacteria"/>
</dbReference>
<dbReference type="HOGENOM" id="CLU_035168_3_0_5"/>
<dbReference type="UniPathway" id="UPA00538">
    <property type="reaction ID" value="UER00592"/>
</dbReference>
<dbReference type="Proteomes" id="UP000006575">
    <property type="component" value="Chromosome"/>
</dbReference>
<dbReference type="GO" id="GO:0005737">
    <property type="term" value="C:cytoplasm"/>
    <property type="evidence" value="ECO:0007669"/>
    <property type="project" value="UniProtKB-SubCell"/>
</dbReference>
<dbReference type="GO" id="GO:0033819">
    <property type="term" value="F:lipoyl(octanoyl) transferase activity"/>
    <property type="evidence" value="ECO:0007669"/>
    <property type="project" value="UniProtKB-EC"/>
</dbReference>
<dbReference type="GO" id="GO:0036211">
    <property type="term" value="P:protein modification process"/>
    <property type="evidence" value="ECO:0007669"/>
    <property type="project" value="InterPro"/>
</dbReference>
<dbReference type="CDD" id="cd16444">
    <property type="entry name" value="LipB"/>
    <property type="match status" value="1"/>
</dbReference>
<dbReference type="Gene3D" id="3.30.930.10">
    <property type="entry name" value="Bira Bifunctional Protein, Domain 2"/>
    <property type="match status" value="1"/>
</dbReference>
<dbReference type="HAMAP" id="MF_00013">
    <property type="entry name" value="LipB"/>
    <property type="match status" value="1"/>
</dbReference>
<dbReference type="InterPro" id="IPR045864">
    <property type="entry name" value="aa-tRNA-synth_II/BPL/LPL"/>
</dbReference>
<dbReference type="InterPro" id="IPR004143">
    <property type="entry name" value="BPL_LPL_catalytic"/>
</dbReference>
<dbReference type="InterPro" id="IPR000544">
    <property type="entry name" value="Octanoyltransferase"/>
</dbReference>
<dbReference type="InterPro" id="IPR020605">
    <property type="entry name" value="Octanoyltransferase_CS"/>
</dbReference>
<dbReference type="NCBIfam" id="TIGR00214">
    <property type="entry name" value="lipB"/>
    <property type="match status" value="1"/>
</dbReference>
<dbReference type="NCBIfam" id="NF010921">
    <property type="entry name" value="PRK14341.1"/>
    <property type="match status" value="1"/>
</dbReference>
<dbReference type="PANTHER" id="PTHR10993:SF7">
    <property type="entry name" value="LIPOYLTRANSFERASE 2, MITOCHONDRIAL-RELATED"/>
    <property type="match status" value="1"/>
</dbReference>
<dbReference type="PANTHER" id="PTHR10993">
    <property type="entry name" value="OCTANOYLTRANSFERASE"/>
    <property type="match status" value="1"/>
</dbReference>
<dbReference type="Pfam" id="PF21948">
    <property type="entry name" value="LplA-B_cat"/>
    <property type="match status" value="1"/>
</dbReference>
<dbReference type="PIRSF" id="PIRSF016262">
    <property type="entry name" value="LPLase"/>
    <property type="match status" value="1"/>
</dbReference>
<dbReference type="SUPFAM" id="SSF55681">
    <property type="entry name" value="Class II aaRS and biotin synthetases"/>
    <property type="match status" value="1"/>
</dbReference>
<dbReference type="PROSITE" id="PS51733">
    <property type="entry name" value="BPL_LPL_CATALYTIC"/>
    <property type="match status" value="1"/>
</dbReference>
<dbReference type="PROSITE" id="PS01313">
    <property type="entry name" value="LIPB"/>
    <property type="match status" value="1"/>
</dbReference>
<organism>
    <name type="scientific">Rhizobium johnstonii (strain DSM 114642 / LMG 32736 / 3841)</name>
    <name type="common">Rhizobium leguminosarum bv. viciae</name>
    <dbReference type="NCBI Taxonomy" id="216596"/>
    <lineage>
        <taxon>Bacteria</taxon>
        <taxon>Pseudomonadati</taxon>
        <taxon>Pseudomonadota</taxon>
        <taxon>Alphaproteobacteria</taxon>
        <taxon>Hyphomicrobiales</taxon>
        <taxon>Rhizobiaceae</taxon>
        <taxon>Rhizobium/Agrobacterium group</taxon>
        <taxon>Rhizobium</taxon>
        <taxon>Rhizobium johnstonii</taxon>
    </lineage>
</organism>
<reference key="1">
    <citation type="journal article" date="2006" name="Genome Biol.">
        <title>The genome of Rhizobium leguminosarum has recognizable core and accessory components.</title>
        <authorList>
            <person name="Young J.P.W."/>
            <person name="Crossman L.C."/>
            <person name="Johnston A.W.B."/>
            <person name="Thomson N.R."/>
            <person name="Ghazoui Z.F."/>
            <person name="Hull K.H."/>
            <person name="Wexler M."/>
            <person name="Curson A.R.J."/>
            <person name="Todd J.D."/>
            <person name="Poole P.S."/>
            <person name="Mauchline T.H."/>
            <person name="East A.K."/>
            <person name="Quail M.A."/>
            <person name="Churcher C."/>
            <person name="Arrowsmith C."/>
            <person name="Cherevach I."/>
            <person name="Chillingworth T."/>
            <person name="Clarke K."/>
            <person name="Cronin A."/>
            <person name="Davis P."/>
            <person name="Fraser A."/>
            <person name="Hance Z."/>
            <person name="Hauser H."/>
            <person name="Jagels K."/>
            <person name="Moule S."/>
            <person name="Mungall K."/>
            <person name="Norbertczak H."/>
            <person name="Rabbinowitsch E."/>
            <person name="Sanders M."/>
            <person name="Simmonds M."/>
            <person name="Whitehead S."/>
            <person name="Parkhill J."/>
        </authorList>
    </citation>
    <scope>NUCLEOTIDE SEQUENCE [LARGE SCALE GENOMIC DNA]</scope>
    <source>
        <strain>DSM 114642 / LMG 32736 / 3841</strain>
    </source>
</reference>
<feature type="chain" id="PRO_0000321663" description="Octanoyltransferase">
    <location>
        <begin position="1"/>
        <end position="239"/>
    </location>
</feature>
<feature type="domain" description="BPL/LPL catalytic" evidence="2">
    <location>
        <begin position="48"/>
        <end position="236"/>
    </location>
</feature>
<feature type="active site" description="Acyl-thioester intermediate" evidence="1">
    <location>
        <position position="198"/>
    </location>
</feature>
<feature type="binding site" evidence="1">
    <location>
        <begin position="87"/>
        <end position="94"/>
    </location>
    <ligand>
        <name>substrate</name>
    </ligand>
</feature>
<feature type="binding site" evidence="1">
    <location>
        <begin position="167"/>
        <end position="169"/>
    </location>
    <ligand>
        <name>substrate</name>
    </ligand>
</feature>
<feature type="binding site" evidence="1">
    <location>
        <begin position="180"/>
        <end position="182"/>
    </location>
    <ligand>
        <name>substrate</name>
    </ligand>
</feature>
<feature type="site" description="Lowers pKa of active site Cys" evidence="1">
    <location>
        <position position="164"/>
    </location>
</feature>
<comment type="function">
    <text evidence="1">Catalyzes the transfer of endogenously produced octanoic acid from octanoyl-acyl-carrier-protein onto the lipoyl domains of lipoate-dependent enzymes. Lipoyl-ACP can also act as a substrate although octanoyl-ACP is likely to be the physiological substrate.</text>
</comment>
<comment type="catalytic activity">
    <reaction evidence="1">
        <text>octanoyl-[ACP] + L-lysyl-[protein] = N(6)-octanoyl-L-lysyl-[protein] + holo-[ACP] + H(+)</text>
        <dbReference type="Rhea" id="RHEA:17665"/>
        <dbReference type="Rhea" id="RHEA-COMP:9636"/>
        <dbReference type="Rhea" id="RHEA-COMP:9685"/>
        <dbReference type="Rhea" id="RHEA-COMP:9752"/>
        <dbReference type="Rhea" id="RHEA-COMP:9928"/>
        <dbReference type="ChEBI" id="CHEBI:15378"/>
        <dbReference type="ChEBI" id="CHEBI:29969"/>
        <dbReference type="ChEBI" id="CHEBI:64479"/>
        <dbReference type="ChEBI" id="CHEBI:78463"/>
        <dbReference type="ChEBI" id="CHEBI:78809"/>
        <dbReference type="EC" id="2.3.1.181"/>
    </reaction>
</comment>
<comment type="pathway">
    <text evidence="1">Protein modification; protein lipoylation via endogenous pathway; protein N(6)-(lipoyl)lysine from octanoyl-[acyl-carrier-protein]: step 1/2.</text>
</comment>
<comment type="subcellular location">
    <subcellularLocation>
        <location evidence="1">Cytoplasm</location>
    </subcellularLocation>
</comment>
<comment type="miscellaneous">
    <text evidence="1">In the reaction, the free carboxyl group of octanoic acid is attached via an amide linkage to the epsilon-amino group of a specific lysine residue of lipoyl domains of lipoate-dependent enzymes.</text>
</comment>
<comment type="similarity">
    <text evidence="1">Belongs to the LipB family.</text>
</comment>
<comment type="sequence caution" evidence="3">
    <conflict type="erroneous initiation">
        <sequence resource="EMBL-CDS" id="CAK08043"/>
    </conflict>
    <text>Truncated N-terminus.</text>
</comment>
<protein>
    <recommendedName>
        <fullName evidence="1">Octanoyltransferase</fullName>
        <ecNumber evidence="1">2.3.1.181</ecNumber>
    </recommendedName>
    <alternativeName>
        <fullName evidence="1">Lipoate-protein ligase B</fullName>
    </alternativeName>
    <alternativeName>
        <fullName evidence="1">Lipoyl/octanoyl transferase</fullName>
    </alternativeName>
    <alternativeName>
        <fullName evidence="1">Octanoyl-[acyl-carrier-protein]-protein N-octanoyltransferase</fullName>
    </alternativeName>
</protein>
<name>LIPB_RHIJ3</name>
<accession>Q1MG80</accession>
<sequence>MAMLRTDLEFSMLPQLGTRPVRWRFADGLVPYEEAVETMEREVALIADGGDELVWLVEHPPLYTAGTSANARDLVQPNRFPVFATGRGGEYTYHGPGQRVAYVMLDLKRRRQDVRAFVAALEDVVIRTLDMMNVRGERREDRVGVWVRRPEKPLLADGTMAEDKIAALGIRLRKWVTFHGLSLNVDPDLDHFGGIVPCGISAYGVTSLVDLGLPVMMADVDIRLRTAFEAVFGETTGEI</sequence>
<evidence type="ECO:0000255" key="1">
    <source>
        <dbReference type="HAMAP-Rule" id="MF_00013"/>
    </source>
</evidence>
<evidence type="ECO:0000255" key="2">
    <source>
        <dbReference type="PROSITE-ProRule" id="PRU01067"/>
    </source>
</evidence>
<evidence type="ECO:0000305" key="3"/>